<accession>B0JFQ0</accession>
<comment type="function">
    <text evidence="1">The UvrABC repair system catalyzes the recognition and processing of DNA lesions. UvrC both incises the 5' and 3' sides of the lesion. The N-terminal half is responsible for the 3' incision and the C-terminal half is responsible for the 5' incision.</text>
</comment>
<comment type="subunit">
    <text evidence="1">Interacts with UvrB in an incision complex.</text>
</comment>
<comment type="subcellular location">
    <subcellularLocation>
        <location evidence="1">Cytoplasm</location>
    </subcellularLocation>
</comment>
<comment type="similarity">
    <text evidence="1">Belongs to the UvrC family.</text>
</comment>
<name>UVRC_MICAN</name>
<evidence type="ECO:0000255" key="1">
    <source>
        <dbReference type="HAMAP-Rule" id="MF_00203"/>
    </source>
</evidence>
<proteinExistence type="inferred from homology"/>
<sequence>MFGNNLNSTLIQDLDRLENRLREIPLEPGVYFLRDQNGEILYIGKSKKLRSRVRSYFRPSQPLSPRIALMVRQVTEIEFIVTDTEAESLALEANLIKQHQPHFNTLLKDDKKYPYICITWSETYPRIFITRKRRINNQKDRYYGPYVDTRLLRYTLHLIKRTFPLRQRPQPLFKDRPCLNYDIGRCPGVCQKLISPQDYRETLQKVAMIFQGRTGELLEKLATKMLAASENLDFEQAATIRDQIRGLQALNTDQKVSLPDDTVSRDAIALAKDEQHCCIQLFQVRSGRLVGRLGFFADSQSANEGEILQKVLEEHYLSVEGVEIPSEILLPCELPEGEVLAGWLREKKGRKVELTVPQRQSKADLLAMVEKNALYELEKTKRSADRDLQSLQDLAVILDLPALPHRIEGYDISHIQGSNAVASGVVFIDGVAANQHYRHYKIKNPEVKIGHSDDFASLAEVIRRRFRRYAENPDNIAESDDFPDLVMIDGGKGQLSAVVAVLGEMNLLEQVKVVSLAKQREEIFLPGESSPLETDKEQPGVQLLRRVRDEAHRFAVSFHRQQRMQKSRRSRLDEIPGLGFKRQKELLAHFHSLDYIREASLEQLQQVTGIGEQLAKEIYNYFHPR</sequence>
<feature type="chain" id="PRO_1000077806" description="UvrABC system protein C">
    <location>
        <begin position="1"/>
        <end position="625"/>
    </location>
</feature>
<feature type="domain" description="GIY-YIG" evidence="1">
    <location>
        <begin position="26"/>
        <end position="105"/>
    </location>
</feature>
<feature type="domain" description="UVR" evidence="1">
    <location>
        <begin position="215"/>
        <end position="250"/>
    </location>
</feature>
<gene>
    <name evidence="1" type="primary">uvrC</name>
    <name type="ordered locus">MAE_00230</name>
</gene>
<organism>
    <name type="scientific">Microcystis aeruginosa (strain NIES-843 / IAM M-2473)</name>
    <dbReference type="NCBI Taxonomy" id="449447"/>
    <lineage>
        <taxon>Bacteria</taxon>
        <taxon>Bacillati</taxon>
        <taxon>Cyanobacteriota</taxon>
        <taxon>Cyanophyceae</taxon>
        <taxon>Oscillatoriophycideae</taxon>
        <taxon>Chroococcales</taxon>
        <taxon>Microcystaceae</taxon>
        <taxon>Microcystis</taxon>
    </lineage>
</organism>
<protein>
    <recommendedName>
        <fullName evidence="1">UvrABC system protein C</fullName>
        <shortName evidence="1">Protein UvrC</shortName>
    </recommendedName>
    <alternativeName>
        <fullName evidence="1">Excinuclease ABC subunit C</fullName>
    </alternativeName>
</protein>
<reference key="1">
    <citation type="journal article" date="2007" name="DNA Res.">
        <title>Complete genomic structure of the bloom-forming toxic cyanobacterium Microcystis aeruginosa NIES-843.</title>
        <authorList>
            <person name="Kaneko T."/>
            <person name="Nakajima N."/>
            <person name="Okamoto S."/>
            <person name="Suzuki I."/>
            <person name="Tanabe Y."/>
            <person name="Tamaoki M."/>
            <person name="Nakamura Y."/>
            <person name="Kasai F."/>
            <person name="Watanabe A."/>
            <person name="Kawashima K."/>
            <person name="Kishida Y."/>
            <person name="Ono A."/>
            <person name="Shimizu Y."/>
            <person name="Takahashi C."/>
            <person name="Minami C."/>
            <person name="Fujishiro T."/>
            <person name="Kohara M."/>
            <person name="Katoh M."/>
            <person name="Nakazaki N."/>
            <person name="Nakayama S."/>
            <person name="Yamada M."/>
            <person name="Tabata S."/>
            <person name="Watanabe M.M."/>
        </authorList>
    </citation>
    <scope>NUCLEOTIDE SEQUENCE [LARGE SCALE GENOMIC DNA]</scope>
    <source>
        <strain>NIES-843 / IAM M-247</strain>
    </source>
</reference>
<dbReference type="EMBL" id="AP009552">
    <property type="protein sequence ID" value="BAF99844.1"/>
    <property type="molecule type" value="Genomic_DNA"/>
</dbReference>
<dbReference type="RefSeq" id="WP_012263794.1">
    <property type="nucleotide sequence ID" value="NC_010296.1"/>
</dbReference>
<dbReference type="SMR" id="B0JFQ0"/>
<dbReference type="STRING" id="449447.MAE_00230"/>
<dbReference type="PaxDb" id="449447-MAE_00230"/>
<dbReference type="EnsemblBacteria" id="BAF99844">
    <property type="protein sequence ID" value="BAF99844"/>
    <property type="gene ID" value="MAE_00230"/>
</dbReference>
<dbReference type="KEGG" id="mar:MAE_00230"/>
<dbReference type="PATRIC" id="fig|449447.4.peg.23"/>
<dbReference type="eggNOG" id="COG0322">
    <property type="taxonomic scope" value="Bacteria"/>
</dbReference>
<dbReference type="HOGENOM" id="CLU_014841_3_2_3"/>
<dbReference type="BioCyc" id="MAER449447:MAE_RS00110-MONOMER"/>
<dbReference type="Proteomes" id="UP000001510">
    <property type="component" value="Chromosome"/>
</dbReference>
<dbReference type="GO" id="GO:0005737">
    <property type="term" value="C:cytoplasm"/>
    <property type="evidence" value="ECO:0007669"/>
    <property type="project" value="UniProtKB-SubCell"/>
</dbReference>
<dbReference type="GO" id="GO:0009380">
    <property type="term" value="C:excinuclease repair complex"/>
    <property type="evidence" value="ECO:0007669"/>
    <property type="project" value="InterPro"/>
</dbReference>
<dbReference type="GO" id="GO:0003677">
    <property type="term" value="F:DNA binding"/>
    <property type="evidence" value="ECO:0007669"/>
    <property type="project" value="UniProtKB-UniRule"/>
</dbReference>
<dbReference type="GO" id="GO:0009381">
    <property type="term" value="F:excinuclease ABC activity"/>
    <property type="evidence" value="ECO:0007669"/>
    <property type="project" value="UniProtKB-UniRule"/>
</dbReference>
<dbReference type="GO" id="GO:0006289">
    <property type="term" value="P:nucleotide-excision repair"/>
    <property type="evidence" value="ECO:0007669"/>
    <property type="project" value="UniProtKB-UniRule"/>
</dbReference>
<dbReference type="GO" id="GO:0009432">
    <property type="term" value="P:SOS response"/>
    <property type="evidence" value="ECO:0007669"/>
    <property type="project" value="UniProtKB-UniRule"/>
</dbReference>
<dbReference type="CDD" id="cd10434">
    <property type="entry name" value="GIY-YIG_UvrC_Cho"/>
    <property type="match status" value="1"/>
</dbReference>
<dbReference type="FunFam" id="3.40.1440.10:FF:000001">
    <property type="entry name" value="UvrABC system protein C"/>
    <property type="match status" value="1"/>
</dbReference>
<dbReference type="Gene3D" id="1.10.150.20">
    <property type="entry name" value="5' to 3' exonuclease, C-terminal subdomain"/>
    <property type="match status" value="1"/>
</dbReference>
<dbReference type="Gene3D" id="3.40.1440.10">
    <property type="entry name" value="GIY-YIG endonuclease"/>
    <property type="match status" value="1"/>
</dbReference>
<dbReference type="Gene3D" id="4.10.860.10">
    <property type="entry name" value="UVR domain"/>
    <property type="match status" value="1"/>
</dbReference>
<dbReference type="Gene3D" id="3.30.420.340">
    <property type="entry name" value="UvrC, RNAse H endonuclease domain"/>
    <property type="match status" value="1"/>
</dbReference>
<dbReference type="HAMAP" id="MF_00203">
    <property type="entry name" value="UvrC"/>
    <property type="match status" value="1"/>
</dbReference>
<dbReference type="InterPro" id="IPR041663">
    <property type="entry name" value="DisA/LigA_HHH"/>
</dbReference>
<dbReference type="InterPro" id="IPR000305">
    <property type="entry name" value="GIY-YIG_endonuc"/>
</dbReference>
<dbReference type="InterPro" id="IPR035901">
    <property type="entry name" value="GIY-YIG_endonuc_sf"/>
</dbReference>
<dbReference type="InterPro" id="IPR047296">
    <property type="entry name" value="GIY-YIG_UvrC_Cho"/>
</dbReference>
<dbReference type="InterPro" id="IPR003583">
    <property type="entry name" value="Hlx-hairpin-Hlx_DNA-bd_motif"/>
</dbReference>
<dbReference type="InterPro" id="IPR010994">
    <property type="entry name" value="RuvA_2-like"/>
</dbReference>
<dbReference type="InterPro" id="IPR001943">
    <property type="entry name" value="UVR_dom"/>
</dbReference>
<dbReference type="InterPro" id="IPR036876">
    <property type="entry name" value="UVR_dom_sf"/>
</dbReference>
<dbReference type="InterPro" id="IPR050066">
    <property type="entry name" value="UvrABC_protein_C"/>
</dbReference>
<dbReference type="InterPro" id="IPR004791">
    <property type="entry name" value="UvrC"/>
</dbReference>
<dbReference type="InterPro" id="IPR001162">
    <property type="entry name" value="UvrC_RNase_H_dom"/>
</dbReference>
<dbReference type="InterPro" id="IPR038476">
    <property type="entry name" value="UvrC_RNase_H_dom_sf"/>
</dbReference>
<dbReference type="NCBIfam" id="NF001824">
    <property type="entry name" value="PRK00558.1-5"/>
    <property type="match status" value="1"/>
</dbReference>
<dbReference type="NCBIfam" id="TIGR00194">
    <property type="entry name" value="uvrC"/>
    <property type="match status" value="1"/>
</dbReference>
<dbReference type="PANTHER" id="PTHR30562:SF1">
    <property type="entry name" value="UVRABC SYSTEM PROTEIN C"/>
    <property type="match status" value="1"/>
</dbReference>
<dbReference type="PANTHER" id="PTHR30562">
    <property type="entry name" value="UVRC/OXIDOREDUCTASE"/>
    <property type="match status" value="1"/>
</dbReference>
<dbReference type="Pfam" id="PF01541">
    <property type="entry name" value="GIY-YIG"/>
    <property type="match status" value="1"/>
</dbReference>
<dbReference type="Pfam" id="PF12826">
    <property type="entry name" value="HHH_2"/>
    <property type="match status" value="1"/>
</dbReference>
<dbReference type="Pfam" id="PF02151">
    <property type="entry name" value="UVR"/>
    <property type="match status" value="1"/>
</dbReference>
<dbReference type="Pfam" id="PF22920">
    <property type="entry name" value="UvrC_RNaseH"/>
    <property type="match status" value="1"/>
</dbReference>
<dbReference type="Pfam" id="PF08459">
    <property type="entry name" value="UvrC_RNaseH_dom"/>
    <property type="match status" value="1"/>
</dbReference>
<dbReference type="SMART" id="SM00465">
    <property type="entry name" value="GIYc"/>
    <property type="match status" value="1"/>
</dbReference>
<dbReference type="SMART" id="SM00278">
    <property type="entry name" value="HhH1"/>
    <property type="match status" value="2"/>
</dbReference>
<dbReference type="SUPFAM" id="SSF46600">
    <property type="entry name" value="C-terminal UvrC-binding domain of UvrB"/>
    <property type="match status" value="1"/>
</dbReference>
<dbReference type="SUPFAM" id="SSF82771">
    <property type="entry name" value="GIY-YIG endonuclease"/>
    <property type="match status" value="1"/>
</dbReference>
<dbReference type="SUPFAM" id="SSF47781">
    <property type="entry name" value="RuvA domain 2-like"/>
    <property type="match status" value="1"/>
</dbReference>
<dbReference type="PROSITE" id="PS50164">
    <property type="entry name" value="GIY_YIG"/>
    <property type="match status" value="1"/>
</dbReference>
<dbReference type="PROSITE" id="PS50151">
    <property type="entry name" value="UVR"/>
    <property type="match status" value="1"/>
</dbReference>
<dbReference type="PROSITE" id="PS50165">
    <property type="entry name" value="UVRC"/>
    <property type="match status" value="1"/>
</dbReference>
<keyword id="KW-0963">Cytoplasm</keyword>
<keyword id="KW-0227">DNA damage</keyword>
<keyword id="KW-0228">DNA excision</keyword>
<keyword id="KW-0234">DNA repair</keyword>
<keyword id="KW-0267">Excision nuclease</keyword>
<keyword id="KW-0742">SOS response</keyword>